<organism>
    <name type="scientific">Legionella pneumophila (strain Paris)</name>
    <dbReference type="NCBI Taxonomy" id="297246"/>
    <lineage>
        <taxon>Bacteria</taxon>
        <taxon>Pseudomonadati</taxon>
        <taxon>Pseudomonadota</taxon>
        <taxon>Gammaproteobacteria</taxon>
        <taxon>Legionellales</taxon>
        <taxon>Legionellaceae</taxon>
        <taxon>Legionella</taxon>
    </lineage>
</organism>
<gene>
    <name type="ordered locus">lpp2019</name>
</gene>
<keyword id="KW-0963">Cytoplasm</keyword>
<keyword id="KW-0378">Hydrolase</keyword>
<keyword id="KW-0546">Nucleotide metabolism</keyword>
<sequence>MSKFLQQKPIILASSSTIRHKLMKSLGLDFLVVPSNCNEEEIKTRHNSDELVELGITLAKIKALDVSQHYPEHYIIAADQLCVADKRVFNKPLNHQTAVSHLRELSGKEHQQIACLCIVKESKILWQYHETATLTLHHLSEKTIEAYLQAEKPYQSCGAYQYEGLGKWLFKEVQGSEDTILGLPLMPLVNALVNLKVVGI</sequence>
<name>NTPP_LEGPA</name>
<reference key="1">
    <citation type="journal article" date="2004" name="Nat. Genet.">
        <title>Evidence in the Legionella pneumophila genome for exploitation of host cell functions and high genome plasticity.</title>
        <authorList>
            <person name="Cazalet C."/>
            <person name="Rusniok C."/>
            <person name="Brueggemann H."/>
            <person name="Zidane N."/>
            <person name="Magnier A."/>
            <person name="Ma L."/>
            <person name="Tichit M."/>
            <person name="Jarraud S."/>
            <person name="Bouchier C."/>
            <person name="Vandenesch F."/>
            <person name="Kunst F."/>
            <person name="Etienne J."/>
            <person name="Glaser P."/>
            <person name="Buchrieser C."/>
        </authorList>
    </citation>
    <scope>NUCLEOTIDE SEQUENCE [LARGE SCALE GENOMIC DNA]</scope>
    <source>
        <strain>Paris</strain>
    </source>
</reference>
<accession>Q5X3L5</accession>
<evidence type="ECO:0000255" key="1">
    <source>
        <dbReference type="HAMAP-Rule" id="MF_00528"/>
    </source>
</evidence>
<dbReference type="EC" id="3.6.1.9" evidence="1"/>
<dbReference type="EMBL" id="CR628336">
    <property type="protein sequence ID" value="CAH13171.1"/>
    <property type="molecule type" value="Genomic_DNA"/>
</dbReference>
<dbReference type="RefSeq" id="WP_011214283.1">
    <property type="nucleotide sequence ID" value="NC_006368.1"/>
</dbReference>
<dbReference type="SMR" id="Q5X3L5"/>
<dbReference type="KEGG" id="lpp:lpp2019"/>
<dbReference type="LegioList" id="lpp2019"/>
<dbReference type="HOGENOM" id="CLU_040416_1_1_6"/>
<dbReference type="GO" id="GO:0005737">
    <property type="term" value="C:cytoplasm"/>
    <property type="evidence" value="ECO:0007669"/>
    <property type="project" value="UniProtKB-SubCell"/>
</dbReference>
<dbReference type="GO" id="GO:0047429">
    <property type="term" value="F:nucleoside triphosphate diphosphatase activity"/>
    <property type="evidence" value="ECO:0007669"/>
    <property type="project" value="UniProtKB-EC"/>
</dbReference>
<dbReference type="GO" id="GO:0009117">
    <property type="term" value="P:nucleotide metabolic process"/>
    <property type="evidence" value="ECO:0007669"/>
    <property type="project" value="UniProtKB-KW"/>
</dbReference>
<dbReference type="CDD" id="cd00555">
    <property type="entry name" value="Maf"/>
    <property type="match status" value="1"/>
</dbReference>
<dbReference type="Gene3D" id="3.90.950.10">
    <property type="match status" value="1"/>
</dbReference>
<dbReference type="HAMAP" id="MF_00528">
    <property type="entry name" value="Maf"/>
    <property type="match status" value="1"/>
</dbReference>
<dbReference type="InterPro" id="IPR029001">
    <property type="entry name" value="ITPase-like_fam"/>
</dbReference>
<dbReference type="InterPro" id="IPR003697">
    <property type="entry name" value="Maf-like"/>
</dbReference>
<dbReference type="NCBIfam" id="TIGR00172">
    <property type="entry name" value="maf"/>
    <property type="match status" value="1"/>
</dbReference>
<dbReference type="PANTHER" id="PTHR43213">
    <property type="entry name" value="BIFUNCTIONAL DTTP/UTP PYROPHOSPHATASE/METHYLTRANSFERASE PROTEIN-RELATED"/>
    <property type="match status" value="1"/>
</dbReference>
<dbReference type="PANTHER" id="PTHR43213:SF5">
    <property type="entry name" value="BIFUNCTIONAL DTTP_UTP PYROPHOSPHATASE_METHYLTRANSFERASE PROTEIN-RELATED"/>
    <property type="match status" value="1"/>
</dbReference>
<dbReference type="Pfam" id="PF02545">
    <property type="entry name" value="Maf"/>
    <property type="match status" value="1"/>
</dbReference>
<dbReference type="PIRSF" id="PIRSF006305">
    <property type="entry name" value="Maf"/>
    <property type="match status" value="1"/>
</dbReference>
<dbReference type="SUPFAM" id="SSF52972">
    <property type="entry name" value="ITPase-like"/>
    <property type="match status" value="1"/>
</dbReference>
<proteinExistence type="inferred from homology"/>
<protein>
    <recommendedName>
        <fullName evidence="1">Nucleoside triphosphate pyrophosphatase</fullName>
        <ecNumber evidence="1">3.6.1.9</ecNumber>
    </recommendedName>
    <alternativeName>
        <fullName evidence="1">Nucleotide pyrophosphatase</fullName>
        <shortName evidence="1">Nucleotide PPase</shortName>
    </alternativeName>
</protein>
<feature type="chain" id="PRO_0000267330" description="Nucleoside triphosphate pyrophosphatase">
    <location>
        <begin position="1"/>
        <end position="200"/>
    </location>
</feature>
<feature type="active site" description="Proton acceptor" evidence="1">
    <location>
        <position position="79"/>
    </location>
</feature>
<comment type="function">
    <text evidence="1">Nucleoside triphosphate pyrophosphatase. May have a dual role in cell division arrest and in preventing the incorporation of modified nucleotides into cellular nucleic acids.</text>
</comment>
<comment type="catalytic activity">
    <reaction evidence="1">
        <text>a ribonucleoside 5'-triphosphate + H2O = a ribonucleoside 5'-phosphate + diphosphate + H(+)</text>
        <dbReference type="Rhea" id="RHEA:23996"/>
        <dbReference type="ChEBI" id="CHEBI:15377"/>
        <dbReference type="ChEBI" id="CHEBI:15378"/>
        <dbReference type="ChEBI" id="CHEBI:33019"/>
        <dbReference type="ChEBI" id="CHEBI:58043"/>
        <dbReference type="ChEBI" id="CHEBI:61557"/>
        <dbReference type="EC" id="3.6.1.9"/>
    </reaction>
</comment>
<comment type="catalytic activity">
    <reaction evidence="1">
        <text>a 2'-deoxyribonucleoside 5'-triphosphate + H2O = a 2'-deoxyribonucleoside 5'-phosphate + diphosphate + H(+)</text>
        <dbReference type="Rhea" id="RHEA:44644"/>
        <dbReference type="ChEBI" id="CHEBI:15377"/>
        <dbReference type="ChEBI" id="CHEBI:15378"/>
        <dbReference type="ChEBI" id="CHEBI:33019"/>
        <dbReference type="ChEBI" id="CHEBI:61560"/>
        <dbReference type="ChEBI" id="CHEBI:65317"/>
        <dbReference type="EC" id="3.6.1.9"/>
    </reaction>
</comment>
<comment type="cofactor">
    <cofactor evidence="1">
        <name>a divalent metal cation</name>
        <dbReference type="ChEBI" id="CHEBI:60240"/>
    </cofactor>
</comment>
<comment type="subcellular location">
    <subcellularLocation>
        <location evidence="1">Cytoplasm</location>
    </subcellularLocation>
</comment>
<comment type="similarity">
    <text evidence="1">Belongs to the Maf family.</text>
</comment>